<comment type="function">
    <text evidence="5 7">E3 ubiquitin-protein ligase that plays a role in the regulation of inflammatory response (PubMed:36681779). Mechanistically, mediates the 'Lys-48'-linked polyubiquitination of TAB2, a regulatory protein of the kinase TAK1, leading to its degradation via the proteasomal pathway and inhibition of the TLR-mediated inflammatory immune response (PubMed:36681779). May act as a transcriptional repressor in mitogen-activated protein kinase signaling pathway.</text>
</comment>
<comment type="catalytic activity">
    <reaction evidence="7">
        <text>S-ubiquitinyl-[E2 ubiquitin-conjugating enzyme]-L-cysteine + [acceptor protein]-L-lysine = [E2 ubiquitin-conjugating enzyme]-L-cysteine + N(6)-ubiquitinyl-[acceptor protein]-L-lysine.</text>
        <dbReference type="EC" id="2.3.2.27"/>
    </reaction>
</comment>
<comment type="interaction">
    <interactant intactId="EBI-11993364">
        <id>Q9H8W5-2</id>
    </interactant>
    <interactant intactId="EBI-9357295">
        <id>Q9BTE6-2</id>
        <label>AARSD1</label>
    </interactant>
    <organismsDiffer>false</organismsDiffer>
    <experiments>3</experiments>
</comment>
<comment type="interaction">
    <interactant intactId="EBI-11993364">
        <id>Q9H8W5-2</id>
    </interactant>
    <interactant intactId="EBI-720116">
        <id>P60520</id>
        <label>GABARAPL2</label>
    </interactant>
    <organismsDiffer>false</organismsDiffer>
    <experiments>3</experiments>
</comment>
<comment type="interaction">
    <interactant intactId="EBI-11993364">
        <id>Q9H8W5-2</id>
    </interactant>
    <interactant intactId="EBI-394354">
        <id>Q9BTT4</id>
        <label>MED10</label>
    </interactant>
    <organismsDiffer>false</organismsDiffer>
    <experiments>3</experiments>
</comment>
<comment type="interaction">
    <interactant intactId="EBI-11993364">
        <id>Q9H8W5-2</id>
    </interactant>
    <interactant intactId="EBI-16439278">
        <id>Q6FHY5</id>
        <label>MEOX2</label>
    </interactant>
    <organismsDiffer>false</organismsDiffer>
    <experiments>3</experiments>
</comment>
<comment type="interaction">
    <interactant intactId="EBI-11993364">
        <id>Q9H8W5-2</id>
    </interactant>
    <interactant intactId="EBI-372899">
        <id>Q13148</id>
        <label>TARDBP</label>
    </interactant>
    <organismsDiffer>false</organismsDiffer>
    <experiments>3</experiments>
</comment>
<comment type="interaction">
    <interactant intactId="EBI-11993364">
        <id>Q9H8W5-2</id>
    </interactant>
    <interactant intactId="EBI-529518">
        <id>Q86VP1</id>
        <label>TAX1BP1</label>
    </interactant>
    <organismsDiffer>false</organismsDiffer>
    <experiments>3</experiments>
</comment>
<comment type="interaction">
    <interactant intactId="EBI-11993364">
        <id>Q9H8W5-2</id>
    </interactant>
    <interactant intactId="EBI-11139477">
        <id>Q96N21</id>
        <label>TEPSIN</label>
    </interactant>
    <organismsDiffer>false</organismsDiffer>
    <experiments>3</experiments>
</comment>
<comment type="interaction">
    <interactant intactId="EBI-11993364">
        <id>Q9H8W5-2</id>
    </interactant>
    <interactant intactId="EBI-1105213">
        <id>Q9UBB9</id>
        <label>TFIP11</label>
    </interactant>
    <organismsDiffer>false</organismsDiffer>
    <experiments>3</experiments>
</comment>
<comment type="interaction">
    <interactant intactId="EBI-11993364">
        <id>Q9H8W5-2</id>
    </interactant>
    <interactant intactId="EBI-746595">
        <id>Q96E35</id>
        <label>ZMYND19</label>
    </interactant>
    <organismsDiffer>false</organismsDiffer>
    <experiments>3</experiments>
</comment>
<comment type="subcellular location">
    <subcellularLocation>
        <location evidence="5 7">Cytoplasm</location>
    </subcellularLocation>
    <subcellularLocation>
        <location evidence="5">Nucleus</location>
    </subcellularLocation>
</comment>
<comment type="alternative products">
    <event type="alternative splicing"/>
    <isoform>
        <id>Q9H8W5-1</id>
        <name>1</name>
        <sequence type="displayed"/>
    </isoform>
    <isoform>
        <id>Q9H8W5-2</id>
        <name>2</name>
        <sequence type="described" ref="VSP_012000"/>
    </isoform>
</comment>
<comment type="tissue specificity">
    <text evidence="5">Expressed in skeletal muscle, brain, heart and pancreas.</text>
</comment>
<comment type="developmental stage">
    <text evidence="5">Expressed in brain, lung, skeletal muscle, heart and intestine in 80-day old embryo.</text>
</comment>
<comment type="similarity">
    <text evidence="10">Belongs to the TRIM/RBCC family.</text>
</comment>
<proteinExistence type="evidence at protein level"/>
<keyword id="KW-0002">3D-structure</keyword>
<keyword id="KW-0025">Alternative splicing</keyword>
<keyword id="KW-0175">Coiled coil</keyword>
<keyword id="KW-0963">Cytoplasm</keyword>
<keyword id="KW-0479">Metal-binding</keyword>
<keyword id="KW-0539">Nucleus</keyword>
<keyword id="KW-1267">Proteomics identification</keyword>
<keyword id="KW-1185">Reference proteome</keyword>
<keyword id="KW-0677">Repeat</keyword>
<keyword id="KW-0808">Transferase</keyword>
<keyword id="KW-0833">Ubl conjugation pathway</keyword>
<keyword id="KW-0862">Zinc</keyword>
<keyword id="KW-0863">Zinc-finger</keyword>
<evidence type="ECO:0000255" key="1"/>
<evidence type="ECO:0000255" key="2">
    <source>
        <dbReference type="PROSITE-ProRule" id="PRU00024"/>
    </source>
</evidence>
<evidence type="ECO:0000255" key="3">
    <source>
        <dbReference type="PROSITE-ProRule" id="PRU00175"/>
    </source>
</evidence>
<evidence type="ECO:0000269" key="4">
    <source>
    </source>
</evidence>
<evidence type="ECO:0000269" key="5">
    <source>
    </source>
</evidence>
<evidence type="ECO:0000269" key="6">
    <source>
    </source>
</evidence>
<evidence type="ECO:0000269" key="7">
    <source>
    </source>
</evidence>
<evidence type="ECO:0000269" key="8">
    <source ref="3"/>
</evidence>
<evidence type="ECO:0000303" key="9">
    <source>
    </source>
</evidence>
<evidence type="ECO:0000305" key="10"/>
<evidence type="ECO:0007829" key="11">
    <source>
        <dbReference type="PDB" id="2DS4"/>
    </source>
</evidence>
<organism>
    <name type="scientific">Homo sapiens</name>
    <name type="common">Human</name>
    <dbReference type="NCBI Taxonomy" id="9606"/>
    <lineage>
        <taxon>Eukaryota</taxon>
        <taxon>Metazoa</taxon>
        <taxon>Chordata</taxon>
        <taxon>Craniata</taxon>
        <taxon>Vertebrata</taxon>
        <taxon>Euteleostomi</taxon>
        <taxon>Mammalia</taxon>
        <taxon>Eutheria</taxon>
        <taxon>Euarchontoglires</taxon>
        <taxon>Primates</taxon>
        <taxon>Haplorrhini</taxon>
        <taxon>Catarrhini</taxon>
        <taxon>Hominidae</taxon>
        <taxon>Homo</taxon>
    </lineage>
</organism>
<accession>Q9H8W5</accession>
<accession>Q53GN0</accession>
<accession>Q5T2K4</accession>
<accession>Q5T2K5</accession>
<accession>Q8IYV6</accession>
<gene>
    <name type="primary">TRIM45</name>
    <name type="synonym">RNF99</name>
</gene>
<reference key="1">
    <citation type="journal article" date="2004" name="Biochem. Biophys. Res. Commun.">
        <title>TRIM45, a novel human RBCC/TRIM protein, inhibits transcriptional activities of ElK-1 and AP-1.</title>
        <authorList>
            <person name="Wang Y."/>
            <person name="Li Y."/>
            <person name="Qi X."/>
            <person name="Yuan W."/>
            <person name="Ai J."/>
            <person name="Zhu C."/>
            <person name="Cao L."/>
            <person name="Yang H."/>
            <person name="Liu F."/>
            <person name="Wu X."/>
            <person name="Liu M."/>
        </authorList>
    </citation>
    <scope>NUCLEOTIDE SEQUENCE [MRNA] (ISOFORM 1)</scope>
    <scope>VARIANT THR-496</scope>
    <scope>FUNCTION</scope>
    <scope>SUBCELLULAR LOCATION</scope>
    <scope>TISSUE SPECIFICITY</scope>
    <scope>DEVELOPMENTAL STAGE</scope>
    <source>
        <tissue>Embryonic heart</tissue>
    </source>
</reference>
<reference key="2">
    <citation type="journal article" date="2004" name="Nat. Genet.">
        <title>Complete sequencing and characterization of 21,243 full-length human cDNAs.</title>
        <authorList>
            <person name="Ota T."/>
            <person name="Suzuki Y."/>
            <person name="Nishikawa T."/>
            <person name="Otsuki T."/>
            <person name="Sugiyama T."/>
            <person name="Irie R."/>
            <person name="Wakamatsu A."/>
            <person name="Hayashi K."/>
            <person name="Sato H."/>
            <person name="Nagai K."/>
            <person name="Kimura K."/>
            <person name="Makita H."/>
            <person name="Sekine M."/>
            <person name="Obayashi M."/>
            <person name="Nishi T."/>
            <person name="Shibahara T."/>
            <person name="Tanaka T."/>
            <person name="Ishii S."/>
            <person name="Yamamoto J."/>
            <person name="Saito K."/>
            <person name="Kawai Y."/>
            <person name="Isono Y."/>
            <person name="Nakamura Y."/>
            <person name="Nagahari K."/>
            <person name="Murakami K."/>
            <person name="Yasuda T."/>
            <person name="Iwayanagi T."/>
            <person name="Wagatsuma M."/>
            <person name="Shiratori A."/>
            <person name="Sudo H."/>
            <person name="Hosoiri T."/>
            <person name="Kaku Y."/>
            <person name="Kodaira H."/>
            <person name="Kondo H."/>
            <person name="Sugawara M."/>
            <person name="Takahashi M."/>
            <person name="Kanda K."/>
            <person name="Yokoi T."/>
            <person name="Furuya T."/>
            <person name="Kikkawa E."/>
            <person name="Omura Y."/>
            <person name="Abe K."/>
            <person name="Kamihara K."/>
            <person name="Katsuta N."/>
            <person name="Sato K."/>
            <person name="Tanikawa M."/>
            <person name="Yamazaki M."/>
            <person name="Ninomiya K."/>
            <person name="Ishibashi T."/>
            <person name="Yamashita H."/>
            <person name="Murakawa K."/>
            <person name="Fujimori K."/>
            <person name="Tanai H."/>
            <person name="Kimata M."/>
            <person name="Watanabe M."/>
            <person name="Hiraoka S."/>
            <person name="Chiba Y."/>
            <person name="Ishida S."/>
            <person name="Ono Y."/>
            <person name="Takiguchi S."/>
            <person name="Watanabe S."/>
            <person name="Yosida M."/>
            <person name="Hotuta T."/>
            <person name="Kusano J."/>
            <person name="Kanehori K."/>
            <person name="Takahashi-Fujii A."/>
            <person name="Hara H."/>
            <person name="Tanase T.-O."/>
            <person name="Nomura Y."/>
            <person name="Togiya S."/>
            <person name="Komai F."/>
            <person name="Hara R."/>
            <person name="Takeuchi K."/>
            <person name="Arita M."/>
            <person name="Imose N."/>
            <person name="Musashino K."/>
            <person name="Yuuki H."/>
            <person name="Oshima A."/>
            <person name="Sasaki N."/>
            <person name="Aotsuka S."/>
            <person name="Yoshikawa Y."/>
            <person name="Matsunawa H."/>
            <person name="Ichihara T."/>
            <person name="Shiohata N."/>
            <person name="Sano S."/>
            <person name="Moriya S."/>
            <person name="Momiyama H."/>
            <person name="Satoh N."/>
            <person name="Takami S."/>
            <person name="Terashima Y."/>
            <person name="Suzuki O."/>
            <person name="Nakagawa S."/>
            <person name="Senoh A."/>
            <person name="Mizoguchi H."/>
            <person name="Goto Y."/>
            <person name="Shimizu F."/>
            <person name="Wakebe H."/>
            <person name="Hishigaki H."/>
            <person name="Watanabe T."/>
            <person name="Sugiyama A."/>
            <person name="Takemoto M."/>
            <person name="Kawakami B."/>
            <person name="Yamazaki M."/>
            <person name="Watanabe K."/>
            <person name="Kumagai A."/>
            <person name="Itakura S."/>
            <person name="Fukuzumi Y."/>
            <person name="Fujimori Y."/>
            <person name="Komiyama M."/>
            <person name="Tashiro H."/>
            <person name="Tanigami A."/>
            <person name="Fujiwara T."/>
            <person name="Ono T."/>
            <person name="Yamada K."/>
            <person name="Fujii Y."/>
            <person name="Ozaki K."/>
            <person name="Hirao M."/>
            <person name="Ohmori Y."/>
            <person name="Kawabata A."/>
            <person name="Hikiji T."/>
            <person name="Kobatake N."/>
            <person name="Inagaki H."/>
            <person name="Ikema Y."/>
            <person name="Okamoto S."/>
            <person name="Okitani R."/>
            <person name="Kawakami T."/>
            <person name="Noguchi S."/>
            <person name="Itoh T."/>
            <person name="Shigeta K."/>
            <person name="Senba T."/>
            <person name="Matsumura K."/>
            <person name="Nakajima Y."/>
            <person name="Mizuno T."/>
            <person name="Morinaga M."/>
            <person name="Sasaki M."/>
            <person name="Togashi T."/>
            <person name="Oyama M."/>
            <person name="Hata H."/>
            <person name="Watanabe M."/>
            <person name="Komatsu T."/>
            <person name="Mizushima-Sugano J."/>
            <person name="Satoh T."/>
            <person name="Shirai Y."/>
            <person name="Takahashi Y."/>
            <person name="Nakagawa K."/>
            <person name="Okumura K."/>
            <person name="Nagase T."/>
            <person name="Nomura N."/>
            <person name="Kikuchi H."/>
            <person name="Masuho Y."/>
            <person name="Yamashita R."/>
            <person name="Nakai K."/>
            <person name="Yada T."/>
            <person name="Nakamura Y."/>
            <person name="Ohara O."/>
            <person name="Isogai T."/>
            <person name="Sugano S."/>
        </authorList>
    </citation>
    <scope>NUCLEOTIDE SEQUENCE [LARGE SCALE MRNA] (ISOFORM 1)</scope>
    <scope>VARIANT THR-496</scope>
</reference>
<reference key="3">
    <citation type="submission" date="2005-04" db="EMBL/GenBank/DDBJ databases">
        <authorList>
            <person name="Suzuki Y."/>
            <person name="Sugano S."/>
            <person name="Totoki Y."/>
            <person name="Toyoda A."/>
            <person name="Takeda T."/>
            <person name="Sakaki Y."/>
            <person name="Tanaka A."/>
            <person name="Yokoyama S."/>
        </authorList>
    </citation>
    <scope>NUCLEOTIDE SEQUENCE [LARGE SCALE MRNA]</scope>
    <scope>VARIANTS TYR-375 AND THR-496</scope>
    <source>
        <tissue>Kidney</tissue>
    </source>
</reference>
<reference key="4">
    <citation type="journal article" date="2006" name="Nature">
        <title>The DNA sequence and biological annotation of human chromosome 1.</title>
        <authorList>
            <person name="Gregory S.G."/>
            <person name="Barlow K.F."/>
            <person name="McLay K.E."/>
            <person name="Kaul R."/>
            <person name="Swarbreck D."/>
            <person name="Dunham A."/>
            <person name="Scott C.E."/>
            <person name="Howe K.L."/>
            <person name="Woodfine K."/>
            <person name="Spencer C.C.A."/>
            <person name="Jones M.C."/>
            <person name="Gillson C."/>
            <person name="Searle S."/>
            <person name="Zhou Y."/>
            <person name="Kokocinski F."/>
            <person name="McDonald L."/>
            <person name="Evans R."/>
            <person name="Phillips K."/>
            <person name="Atkinson A."/>
            <person name="Cooper R."/>
            <person name="Jones C."/>
            <person name="Hall R.E."/>
            <person name="Andrews T.D."/>
            <person name="Lloyd C."/>
            <person name="Ainscough R."/>
            <person name="Almeida J.P."/>
            <person name="Ambrose K.D."/>
            <person name="Anderson F."/>
            <person name="Andrew R.W."/>
            <person name="Ashwell R.I.S."/>
            <person name="Aubin K."/>
            <person name="Babbage A.K."/>
            <person name="Bagguley C.L."/>
            <person name="Bailey J."/>
            <person name="Beasley H."/>
            <person name="Bethel G."/>
            <person name="Bird C.P."/>
            <person name="Bray-Allen S."/>
            <person name="Brown J.Y."/>
            <person name="Brown A.J."/>
            <person name="Buckley D."/>
            <person name="Burton J."/>
            <person name="Bye J."/>
            <person name="Carder C."/>
            <person name="Chapman J.C."/>
            <person name="Clark S.Y."/>
            <person name="Clarke G."/>
            <person name="Clee C."/>
            <person name="Cobley V."/>
            <person name="Collier R.E."/>
            <person name="Corby N."/>
            <person name="Coville G.J."/>
            <person name="Davies J."/>
            <person name="Deadman R."/>
            <person name="Dunn M."/>
            <person name="Earthrowl M."/>
            <person name="Ellington A.G."/>
            <person name="Errington H."/>
            <person name="Frankish A."/>
            <person name="Frankland J."/>
            <person name="French L."/>
            <person name="Garner P."/>
            <person name="Garnett J."/>
            <person name="Gay L."/>
            <person name="Ghori M.R.J."/>
            <person name="Gibson R."/>
            <person name="Gilby L.M."/>
            <person name="Gillett W."/>
            <person name="Glithero R.J."/>
            <person name="Grafham D.V."/>
            <person name="Griffiths C."/>
            <person name="Griffiths-Jones S."/>
            <person name="Grocock R."/>
            <person name="Hammond S."/>
            <person name="Harrison E.S.I."/>
            <person name="Hart E."/>
            <person name="Haugen E."/>
            <person name="Heath P.D."/>
            <person name="Holmes S."/>
            <person name="Holt K."/>
            <person name="Howden P.J."/>
            <person name="Hunt A.R."/>
            <person name="Hunt S.E."/>
            <person name="Hunter G."/>
            <person name="Isherwood J."/>
            <person name="James R."/>
            <person name="Johnson C."/>
            <person name="Johnson D."/>
            <person name="Joy A."/>
            <person name="Kay M."/>
            <person name="Kershaw J.K."/>
            <person name="Kibukawa M."/>
            <person name="Kimberley A.M."/>
            <person name="King A."/>
            <person name="Knights A.J."/>
            <person name="Lad H."/>
            <person name="Laird G."/>
            <person name="Lawlor S."/>
            <person name="Leongamornlert D.A."/>
            <person name="Lloyd D.M."/>
            <person name="Loveland J."/>
            <person name="Lovell J."/>
            <person name="Lush M.J."/>
            <person name="Lyne R."/>
            <person name="Martin S."/>
            <person name="Mashreghi-Mohammadi M."/>
            <person name="Matthews L."/>
            <person name="Matthews N.S.W."/>
            <person name="McLaren S."/>
            <person name="Milne S."/>
            <person name="Mistry S."/>
            <person name="Moore M.J.F."/>
            <person name="Nickerson T."/>
            <person name="O'Dell C.N."/>
            <person name="Oliver K."/>
            <person name="Palmeiri A."/>
            <person name="Palmer S.A."/>
            <person name="Parker A."/>
            <person name="Patel D."/>
            <person name="Pearce A.V."/>
            <person name="Peck A.I."/>
            <person name="Pelan S."/>
            <person name="Phelps K."/>
            <person name="Phillimore B.J."/>
            <person name="Plumb R."/>
            <person name="Rajan J."/>
            <person name="Raymond C."/>
            <person name="Rouse G."/>
            <person name="Saenphimmachak C."/>
            <person name="Sehra H.K."/>
            <person name="Sheridan E."/>
            <person name="Shownkeen R."/>
            <person name="Sims S."/>
            <person name="Skuce C.D."/>
            <person name="Smith M."/>
            <person name="Steward C."/>
            <person name="Subramanian S."/>
            <person name="Sycamore N."/>
            <person name="Tracey A."/>
            <person name="Tromans A."/>
            <person name="Van Helmond Z."/>
            <person name="Wall M."/>
            <person name="Wallis J.M."/>
            <person name="White S."/>
            <person name="Whitehead S.L."/>
            <person name="Wilkinson J.E."/>
            <person name="Willey D.L."/>
            <person name="Williams H."/>
            <person name="Wilming L."/>
            <person name="Wray P.W."/>
            <person name="Wu Z."/>
            <person name="Coulson A."/>
            <person name="Vaudin M."/>
            <person name="Sulston J.E."/>
            <person name="Durbin R.M."/>
            <person name="Hubbard T."/>
            <person name="Wooster R."/>
            <person name="Dunham I."/>
            <person name="Carter N.P."/>
            <person name="McVean G."/>
            <person name="Ross M.T."/>
            <person name="Harrow J."/>
            <person name="Olson M.V."/>
            <person name="Beck S."/>
            <person name="Rogers J."/>
            <person name="Bentley D.R."/>
        </authorList>
    </citation>
    <scope>NUCLEOTIDE SEQUENCE [LARGE SCALE GENOMIC DNA]</scope>
</reference>
<reference key="5">
    <citation type="journal article" date="2004" name="Genome Res.">
        <title>The status, quality, and expansion of the NIH full-length cDNA project: the Mammalian Gene Collection (MGC).</title>
        <authorList>
            <consortium name="The MGC Project Team"/>
        </authorList>
    </citation>
    <scope>NUCLEOTIDE SEQUENCE [LARGE SCALE MRNA] (ISOFORM 2)</scope>
    <scope>VARIANT THR-496</scope>
    <source>
        <tissue>Testis</tissue>
    </source>
</reference>
<reference key="6">
    <citation type="journal article" date="2023" name="Cell Death Differ.">
        <title>E3 ligase RNF99 negatively regulates TLR-mediated inflammatory immune response via K48-linked ubiquitination of TAB2.</title>
        <authorList>
            <person name="Zhang J."/>
            <person name="Cao L."/>
            <person name="Gao A."/>
            <person name="Ren R."/>
            <person name="Yu L."/>
            <person name="Li Q."/>
            <person name="Liu Y."/>
            <person name="Qi W."/>
            <person name="Hou Y."/>
            <person name="Sui W."/>
            <person name="Su G."/>
            <person name="Zhang Y."/>
            <person name="Zhang C."/>
            <person name="Zhang M."/>
        </authorList>
    </citation>
    <scope>FUNCTION</scope>
    <scope>SUBCELLULAR LOCATION</scope>
    <scope>CATALYTIC ACTIVITY</scope>
    <scope>MUTAGENESIS OF CYS-94 AND CYS-97</scope>
</reference>
<reference key="7">
    <citation type="submission" date="2006-12" db="PDB data bank">
        <title>Solution structure of the filamin domain from human tripartite motif protein 45.</title>
        <authorList>
            <consortium name="RIKEN structural genomics initiative (RSGI)"/>
        </authorList>
    </citation>
    <scope>STRUCTURE BY NMR OF 396-501</scope>
</reference>
<name>TRI45_HUMAN</name>
<protein>
    <recommendedName>
        <fullName>E3 ubiquitin-protein ligase TRIM45</fullName>
        <ecNumber evidence="7">2.3.2.27</ecNumber>
    </recommendedName>
    <alternativeName>
        <fullName>RING finger protein 99</fullName>
    </alternativeName>
</protein>
<dbReference type="EC" id="2.3.2.27" evidence="7"/>
<dbReference type="EMBL" id="AY669488">
    <property type="protein sequence ID" value="AAT76864.1"/>
    <property type="molecule type" value="mRNA"/>
</dbReference>
<dbReference type="EMBL" id="AK023243">
    <property type="protein sequence ID" value="BAB14484.1"/>
    <property type="molecule type" value="mRNA"/>
</dbReference>
<dbReference type="EMBL" id="AK222901">
    <property type="protein sequence ID" value="BAD96621.1"/>
    <property type="molecule type" value="mRNA"/>
</dbReference>
<dbReference type="EMBL" id="AL391476">
    <property type="status" value="NOT_ANNOTATED_CDS"/>
    <property type="molecule type" value="Genomic_DNA"/>
</dbReference>
<dbReference type="EMBL" id="BC034943">
    <property type="protein sequence ID" value="AAH34943.1"/>
    <property type="molecule type" value="mRNA"/>
</dbReference>
<dbReference type="CCDS" id="CCDS44200.1">
    <molecule id="Q9H8W5-2"/>
</dbReference>
<dbReference type="CCDS" id="CCDS893.1">
    <molecule id="Q9H8W5-1"/>
</dbReference>
<dbReference type="RefSeq" id="NP_001139107.1">
    <molecule id="Q9H8W5-2"/>
    <property type="nucleotide sequence ID" value="NM_001145635.2"/>
</dbReference>
<dbReference type="RefSeq" id="NP_079464.2">
    <molecule id="Q9H8W5-1"/>
    <property type="nucleotide sequence ID" value="NM_025188.4"/>
</dbReference>
<dbReference type="PDB" id="2DS4">
    <property type="method" value="NMR"/>
    <property type="chains" value="A=396-501"/>
</dbReference>
<dbReference type="PDBsum" id="2DS4"/>
<dbReference type="SMR" id="Q9H8W5"/>
<dbReference type="BioGRID" id="123205">
    <property type="interactions" value="35"/>
</dbReference>
<dbReference type="FunCoup" id="Q9H8W5">
    <property type="interactions" value="1167"/>
</dbReference>
<dbReference type="IntAct" id="Q9H8W5">
    <property type="interactions" value="15"/>
</dbReference>
<dbReference type="STRING" id="9606.ENSP00000256649"/>
<dbReference type="iPTMnet" id="Q9H8W5"/>
<dbReference type="PhosphoSitePlus" id="Q9H8W5"/>
<dbReference type="BioMuta" id="TRIM45"/>
<dbReference type="DMDM" id="90110721"/>
<dbReference type="MassIVE" id="Q9H8W5"/>
<dbReference type="PaxDb" id="9606-ENSP00000256649"/>
<dbReference type="PeptideAtlas" id="Q9H8W5"/>
<dbReference type="ProteomicsDB" id="81250">
    <molecule id="Q9H8W5-1"/>
</dbReference>
<dbReference type="ProteomicsDB" id="81251">
    <molecule id="Q9H8W5-2"/>
</dbReference>
<dbReference type="Antibodypedia" id="33887">
    <property type="antibodies" value="234 antibodies from 21 providers"/>
</dbReference>
<dbReference type="DNASU" id="80263"/>
<dbReference type="Ensembl" id="ENST00000256649.9">
    <molecule id="Q9H8W5-1"/>
    <property type="protein sequence ID" value="ENSP00000256649.4"/>
    <property type="gene ID" value="ENSG00000134253.10"/>
</dbReference>
<dbReference type="Ensembl" id="ENST00000369464.7">
    <molecule id="Q9H8W5-2"/>
    <property type="protein sequence ID" value="ENSP00000358476.3"/>
    <property type="gene ID" value="ENSG00000134253.10"/>
</dbReference>
<dbReference type="GeneID" id="80263"/>
<dbReference type="KEGG" id="hsa:80263"/>
<dbReference type="MANE-Select" id="ENST00000256649.9">
    <property type="protein sequence ID" value="ENSP00000256649.4"/>
    <property type="RefSeq nucleotide sequence ID" value="NM_025188.4"/>
    <property type="RefSeq protein sequence ID" value="NP_079464.2"/>
</dbReference>
<dbReference type="UCSC" id="uc001egz.3">
    <molecule id="Q9H8W5-1"/>
    <property type="organism name" value="human"/>
</dbReference>
<dbReference type="AGR" id="HGNC:19018"/>
<dbReference type="CTD" id="80263"/>
<dbReference type="DisGeNET" id="80263"/>
<dbReference type="GeneCards" id="TRIM45"/>
<dbReference type="HGNC" id="HGNC:19018">
    <property type="gene designation" value="TRIM45"/>
</dbReference>
<dbReference type="HPA" id="ENSG00000134253">
    <property type="expression patterns" value="Tissue enhanced (skeletal)"/>
</dbReference>
<dbReference type="MIM" id="609318">
    <property type="type" value="gene"/>
</dbReference>
<dbReference type="neXtProt" id="NX_Q9H8W5"/>
<dbReference type="OpenTargets" id="ENSG00000134253"/>
<dbReference type="PharmGKB" id="PA134873644"/>
<dbReference type="VEuPathDB" id="HostDB:ENSG00000134253"/>
<dbReference type="eggNOG" id="KOG2177">
    <property type="taxonomic scope" value="Eukaryota"/>
</dbReference>
<dbReference type="GeneTree" id="ENSGT00940000154334"/>
<dbReference type="HOGENOM" id="CLU_013137_14_8_1"/>
<dbReference type="InParanoid" id="Q9H8W5"/>
<dbReference type="OMA" id="TRCPLCM"/>
<dbReference type="OrthoDB" id="264520at2759"/>
<dbReference type="PAN-GO" id="Q9H8W5">
    <property type="GO annotations" value="4 GO annotations based on evolutionary models"/>
</dbReference>
<dbReference type="PhylomeDB" id="Q9H8W5"/>
<dbReference type="TreeFam" id="TF324196"/>
<dbReference type="PathwayCommons" id="Q9H8W5"/>
<dbReference type="Reactome" id="R-HSA-877300">
    <property type="pathway name" value="Interferon gamma signaling"/>
</dbReference>
<dbReference type="SignaLink" id="Q9H8W5"/>
<dbReference type="SIGNOR" id="Q9H8W5"/>
<dbReference type="BioGRID-ORCS" id="80263">
    <property type="hits" value="10 hits in 1200 CRISPR screens"/>
</dbReference>
<dbReference type="EvolutionaryTrace" id="Q9H8W5"/>
<dbReference type="GeneWiki" id="TRIM45"/>
<dbReference type="GenomeRNAi" id="80263"/>
<dbReference type="Pharos" id="Q9H8W5">
    <property type="development level" value="Tbio"/>
</dbReference>
<dbReference type="PRO" id="PR:Q9H8W5"/>
<dbReference type="Proteomes" id="UP000005640">
    <property type="component" value="Chromosome 1"/>
</dbReference>
<dbReference type="RNAct" id="Q9H8W5">
    <property type="molecule type" value="protein"/>
</dbReference>
<dbReference type="Bgee" id="ENSG00000134253">
    <property type="expression patterns" value="Expressed in secondary oocyte and 158 other cell types or tissues"/>
</dbReference>
<dbReference type="ExpressionAtlas" id="Q9H8W5">
    <property type="expression patterns" value="baseline and differential"/>
</dbReference>
<dbReference type="GO" id="GO:0005737">
    <property type="term" value="C:cytoplasm"/>
    <property type="evidence" value="ECO:0000314"/>
    <property type="project" value="UniProt"/>
</dbReference>
<dbReference type="GO" id="GO:0005829">
    <property type="term" value="C:cytosol"/>
    <property type="evidence" value="ECO:0000314"/>
    <property type="project" value="HPA"/>
</dbReference>
<dbReference type="GO" id="GO:0045171">
    <property type="term" value="C:intercellular bridge"/>
    <property type="evidence" value="ECO:0000314"/>
    <property type="project" value="HPA"/>
</dbReference>
<dbReference type="GO" id="GO:0005654">
    <property type="term" value="C:nucleoplasm"/>
    <property type="evidence" value="ECO:0000314"/>
    <property type="project" value="HPA"/>
</dbReference>
<dbReference type="GO" id="GO:0061630">
    <property type="term" value="F:ubiquitin protein ligase activity"/>
    <property type="evidence" value="ECO:0000314"/>
    <property type="project" value="FlyBase"/>
</dbReference>
<dbReference type="GO" id="GO:0008270">
    <property type="term" value="F:zinc ion binding"/>
    <property type="evidence" value="ECO:0007669"/>
    <property type="project" value="UniProtKB-KW"/>
</dbReference>
<dbReference type="GO" id="GO:0060348">
    <property type="term" value="P:bone development"/>
    <property type="evidence" value="ECO:0007669"/>
    <property type="project" value="Ensembl"/>
</dbReference>
<dbReference type="GO" id="GO:0050728">
    <property type="term" value="P:negative regulation of inflammatory response"/>
    <property type="evidence" value="ECO:0000314"/>
    <property type="project" value="UniProt"/>
</dbReference>
<dbReference type="GO" id="GO:0043161">
    <property type="term" value="P:proteasome-mediated ubiquitin-dependent protein catabolic process"/>
    <property type="evidence" value="ECO:0000314"/>
    <property type="project" value="UniProt"/>
</dbReference>
<dbReference type="GO" id="GO:0070936">
    <property type="term" value="P:protein K48-linked ubiquitination"/>
    <property type="evidence" value="ECO:0000314"/>
    <property type="project" value="UniProt"/>
</dbReference>
<dbReference type="CDD" id="cd19809">
    <property type="entry name" value="Bbox1_TRIM45_C-X"/>
    <property type="match status" value="1"/>
</dbReference>
<dbReference type="CDD" id="cd19785">
    <property type="entry name" value="Bbox2_TRIM45_C-X"/>
    <property type="match status" value="1"/>
</dbReference>
<dbReference type="CDD" id="cd16588">
    <property type="entry name" value="RING-HC_TRIM45_C-VII"/>
    <property type="match status" value="1"/>
</dbReference>
<dbReference type="FunFam" id="2.60.40.10:FF:001485">
    <property type="entry name" value="Tripartite motif containing 45"/>
    <property type="match status" value="1"/>
</dbReference>
<dbReference type="Gene3D" id="3.30.160.60">
    <property type="entry name" value="Classic Zinc Finger"/>
    <property type="match status" value="1"/>
</dbReference>
<dbReference type="Gene3D" id="2.60.40.10">
    <property type="entry name" value="Immunoglobulins"/>
    <property type="match status" value="1"/>
</dbReference>
<dbReference type="Gene3D" id="3.30.40.10">
    <property type="entry name" value="Zinc/RING finger domain, C3HC4 (zinc finger)"/>
    <property type="match status" value="1"/>
</dbReference>
<dbReference type="InterPro" id="IPR003649">
    <property type="entry name" value="Bbox_C"/>
</dbReference>
<dbReference type="InterPro" id="IPR017868">
    <property type="entry name" value="Filamin/ABP280_repeat-like"/>
</dbReference>
<dbReference type="InterPro" id="IPR001298">
    <property type="entry name" value="Filamin/ABP280_rpt"/>
</dbReference>
<dbReference type="InterPro" id="IPR013783">
    <property type="entry name" value="Ig-like_fold"/>
</dbReference>
<dbReference type="InterPro" id="IPR014756">
    <property type="entry name" value="Ig_E-set"/>
</dbReference>
<dbReference type="InterPro" id="IPR047153">
    <property type="entry name" value="TRIM45/56/19-like"/>
</dbReference>
<dbReference type="InterPro" id="IPR027370">
    <property type="entry name" value="Znf-RING_euk"/>
</dbReference>
<dbReference type="InterPro" id="IPR000315">
    <property type="entry name" value="Znf_B-box"/>
</dbReference>
<dbReference type="InterPro" id="IPR001841">
    <property type="entry name" value="Znf_RING"/>
</dbReference>
<dbReference type="InterPro" id="IPR013083">
    <property type="entry name" value="Znf_RING/FYVE/PHD"/>
</dbReference>
<dbReference type="InterPro" id="IPR017907">
    <property type="entry name" value="Znf_RING_CS"/>
</dbReference>
<dbReference type="PANTHER" id="PTHR25462">
    <property type="entry name" value="BONUS, ISOFORM C-RELATED"/>
    <property type="match status" value="1"/>
</dbReference>
<dbReference type="PANTHER" id="PTHR25462:SF291">
    <property type="entry name" value="E3 UBIQUITIN-PROTEIN LIGASE TRIM45"/>
    <property type="match status" value="1"/>
</dbReference>
<dbReference type="Pfam" id="PF00630">
    <property type="entry name" value="Filamin"/>
    <property type="match status" value="1"/>
</dbReference>
<dbReference type="Pfam" id="PF00643">
    <property type="entry name" value="zf-B_box"/>
    <property type="match status" value="1"/>
</dbReference>
<dbReference type="Pfam" id="PF13445">
    <property type="entry name" value="zf-RING_UBOX"/>
    <property type="match status" value="1"/>
</dbReference>
<dbReference type="SMART" id="SM00502">
    <property type="entry name" value="BBC"/>
    <property type="match status" value="1"/>
</dbReference>
<dbReference type="SMART" id="SM00336">
    <property type="entry name" value="BBOX"/>
    <property type="match status" value="2"/>
</dbReference>
<dbReference type="SMART" id="SM00557">
    <property type="entry name" value="IG_FLMN"/>
    <property type="match status" value="1"/>
</dbReference>
<dbReference type="SMART" id="SM00184">
    <property type="entry name" value="RING"/>
    <property type="match status" value="1"/>
</dbReference>
<dbReference type="SUPFAM" id="SSF57845">
    <property type="entry name" value="B-box zinc-binding domain"/>
    <property type="match status" value="1"/>
</dbReference>
<dbReference type="SUPFAM" id="SSF81296">
    <property type="entry name" value="E set domains"/>
    <property type="match status" value="1"/>
</dbReference>
<dbReference type="SUPFAM" id="SSF57850">
    <property type="entry name" value="RING/U-box"/>
    <property type="match status" value="1"/>
</dbReference>
<dbReference type="PROSITE" id="PS50194">
    <property type="entry name" value="FILAMIN_REPEAT"/>
    <property type="match status" value="1"/>
</dbReference>
<dbReference type="PROSITE" id="PS50119">
    <property type="entry name" value="ZF_BBOX"/>
    <property type="match status" value="2"/>
</dbReference>
<dbReference type="PROSITE" id="PS00518">
    <property type="entry name" value="ZF_RING_1"/>
    <property type="match status" value="1"/>
</dbReference>
<dbReference type="PROSITE" id="PS50089">
    <property type="entry name" value="ZF_RING_2"/>
    <property type="match status" value="1"/>
</dbReference>
<sequence>MSENRKPLLGFVSKLTSGTALGNSGKTHCPLCLGLFKAPRLLPCLHTVCTTCLEQLEPFSVVDIRGGDSDTSSEGSIFQELKPRSLQSQIGILCPVCDAQVDLPMGGVKALTIDHLAVNDVMLESLRGEGQGLVCDLCNDREVEKRCQTCKANLCHFCCQAHRRQKKTTYHTMVDLKDLKGYSRIGKPILCPVHPAEELRLFCEFCDRPVCQDCVVGEHREHPCDFTSNVIHKHGDSVWELLKGTQPHVEALEEALAQIHIINSALQKRVEAVAADVRTFSEGYIKAIEEHRDKLLKQLEDIRAQKENSLQLQKAQLEQLLADMRTGVEFTEHLLTSGSDLEILITKRVVVERLRKLNKVQYSTRPGVNDKIRFCPQEKAGQCRGYEIYGTINTKEVDPAKCVLQGEDLHRAREKQTASFTLLCKDAAGEIMGRGGDNVQVAVVPKDKKDSPVRTMVQDNKDGTYYISYTPKEPGVYTVWVCIKEQHVQGSPFTVMVRRKHRPHSGVFHCCTFCSSGGQKTARCACGGTMPGGYLGCGHGHKGHPGHPHWSCCGKFNEKSECTWTGGQSAPRSLLRTVAL</sequence>
<feature type="chain" id="PRO_0000056266" description="E3 ubiquitin-protein ligase TRIM45">
    <location>
        <begin position="1"/>
        <end position="580"/>
    </location>
</feature>
<feature type="repeat" description="Filamin">
    <location>
        <begin position="394"/>
        <end position="497"/>
    </location>
</feature>
<feature type="zinc finger region" description="RING-type" evidence="3">
    <location>
        <begin position="29"/>
        <end position="98"/>
    </location>
</feature>
<feature type="zinc finger region" description="B box-type 1" evidence="2">
    <location>
        <begin position="130"/>
        <end position="176"/>
    </location>
</feature>
<feature type="zinc finger region" description="B box-type 2" evidence="2">
    <location>
        <begin position="186"/>
        <end position="227"/>
    </location>
</feature>
<feature type="coiled-coil region" evidence="1">
    <location>
        <begin position="281"/>
        <end position="335"/>
    </location>
</feature>
<feature type="binding site" evidence="2">
    <location>
        <position position="135"/>
    </location>
    <ligand>
        <name>Zn(2+)</name>
        <dbReference type="ChEBI" id="CHEBI:29105"/>
        <label>1</label>
    </ligand>
</feature>
<feature type="binding site" evidence="2">
    <location>
        <position position="138"/>
    </location>
    <ligand>
        <name>Zn(2+)</name>
        <dbReference type="ChEBI" id="CHEBI:29105"/>
        <label>1</label>
    </ligand>
</feature>
<feature type="binding site" evidence="2">
    <location>
        <position position="158"/>
    </location>
    <ligand>
        <name>Zn(2+)</name>
        <dbReference type="ChEBI" id="CHEBI:29105"/>
        <label>1</label>
    </ligand>
</feature>
<feature type="binding site" evidence="2">
    <location>
        <position position="162"/>
    </location>
    <ligand>
        <name>Zn(2+)</name>
        <dbReference type="ChEBI" id="CHEBI:29105"/>
        <label>1</label>
    </ligand>
</feature>
<feature type="binding site" evidence="2">
    <location>
        <position position="191"/>
    </location>
    <ligand>
        <name>Zn(2+)</name>
        <dbReference type="ChEBI" id="CHEBI:29105"/>
        <label>2</label>
    </ligand>
</feature>
<feature type="binding site" evidence="2">
    <location>
        <position position="194"/>
    </location>
    <ligand>
        <name>Zn(2+)</name>
        <dbReference type="ChEBI" id="CHEBI:29105"/>
        <label>2</label>
    </ligand>
</feature>
<feature type="binding site" evidence="2">
    <location>
        <position position="214"/>
    </location>
    <ligand>
        <name>Zn(2+)</name>
        <dbReference type="ChEBI" id="CHEBI:29105"/>
        <label>2</label>
    </ligand>
</feature>
<feature type="binding site" evidence="2">
    <location>
        <position position="219"/>
    </location>
    <ligand>
        <name>Zn(2+)</name>
        <dbReference type="ChEBI" id="CHEBI:29105"/>
        <label>2</label>
    </ligand>
</feature>
<feature type="splice variant" id="VSP_012000" description="In isoform 2." evidence="9">
    <location>
        <begin position="390"/>
        <end position="407"/>
    </location>
</feature>
<feature type="sequence variant" id="VAR_044128" description="In dbSNP:rs34863850.">
    <original>R</original>
    <variation>Q</variation>
    <location>
        <position position="353"/>
    </location>
</feature>
<feature type="sequence variant" id="VAR_019931" description="In dbSNP:rs749902." evidence="8">
    <original>C</original>
    <variation>Y</variation>
    <location>
        <position position="375"/>
    </location>
</feature>
<feature type="sequence variant" id="VAR_019932" description="In dbSNP:rs3738413.">
    <original>R</original>
    <variation>Q</variation>
    <location>
        <position position="413"/>
    </location>
</feature>
<feature type="sequence variant" id="VAR_019933" description="In dbSNP:rs1289658." evidence="4 5 6 8">
    <original>M</original>
    <variation>T</variation>
    <location>
        <position position="496"/>
    </location>
</feature>
<feature type="mutagenesis site" description="Loss of ubiquitination activity; when associated with A-97." evidence="7">
    <original>C</original>
    <variation>A</variation>
    <location>
        <position position="94"/>
    </location>
</feature>
<feature type="mutagenesis site" description="Loss of ubiquitination activity; when associated with A-94." evidence="7">
    <original>C</original>
    <variation>A</variation>
    <location>
        <position position="97"/>
    </location>
</feature>
<feature type="turn" evidence="11">
    <location>
        <begin position="399"/>
        <end position="401"/>
    </location>
</feature>
<feature type="strand" evidence="11">
    <location>
        <begin position="403"/>
        <end position="405"/>
    </location>
</feature>
<feature type="turn" evidence="11">
    <location>
        <begin position="407"/>
        <end position="410"/>
    </location>
</feature>
<feature type="strand" evidence="11">
    <location>
        <begin position="411"/>
        <end position="413"/>
    </location>
</feature>
<feature type="strand" evidence="11">
    <location>
        <begin position="418"/>
        <end position="423"/>
    </location>
</feature>
<feature type="strand" evidence="11">
    <location>
        <begin position="429"/>
        <end position="431"/>
    </location>
</feature>
<feature type="strand" evidence="11">
    <location>
        <begin position="439"/>
        <end position="447"/>
    </location>
</feature>
<feature type="strand" evidence="11">
    <location>
        <begin position="454"/>
        <end position="458"/>
    </location>
</feature>
<feature type="strand" evidence="11">
    <location>
        <begin position="461"/>
        <end position="470"/>
    </location>
</feature>
<feature type="strand" evidence="11">
    <location>
        <begin position="472"/>
        <end position="485"/>
    </location>
</feature>
<feature type="strand" evidence="11">
    <location>
        <begin position="492"/>
        <end position="498"/>
    </location>
</feature>